<reference key="1">
    <citation type="journal article" date="2007" name="J. Bacteriol.">
        <title>The complete genome sequence of Roseobacter denitrificans reveals a mixotrophic rather than photosynthetic metabolism.</title>
        <authorList>
            <person name="Swingley W.D."/>
            <person name="Sadekar S."/>
            <person name="Mastrian S.D."/>
            <person name="Matthies H.J."/>
            <person name="Hao J."/>
            <person name="Ramos H."/>
            <person name="Acharya C.R."/>
            <person name="Conrad A.L."/>
            <person name="Taylor H.L."/>
            <person name="Dejesa L.C."/>
            <person name="Shah M.K."/>
            <person name="O'Huallachain M.E."/>
            <person name="Lince M.T."/>
            <person name="Blankenship R.E."/>
            <person name="Beatty J.T."/>
            <person name="Touchman J.W."/>
        </authorList>
    </citation>
    <scope>NUCLEOTIDE SEQUENCE [LARGE SCALE GENOMIC DNA]</scope>
    <source>
        <strain>ATCC 33942 / OCh 114</strain>
    </source>
</reference>
<organism>
    <name type="scientific">Roseobacter denitrificans (strain ATCC 33942 / OCh 114)</name>
    <name type="common">Erythrobacter sp. (strain OCh 114)</name>
    <name type="synonym">Roseobacter denitrificans</name>
    <dbReference type="NCBI Taxonomy" id="375451"/>
    <lineage>
        <taxon>Bacteria</taxon>
        <taxon>Pseudomonadati</taxon>
        <taxon>Pseudomonadota</taxon>
        <taxon>Alphaproteobacteria</taxon>
        <taxon>Rhodobacterales</taxon>
        <taxon>Roseobacteraceae</taxon>
        <taxon>Roseobacter</taxon>
    </lineage>
</organism>
<evidence type="ECO:0000255" key="1">
    <source>
        <dbReference type="HAMAP-Rule" id="MF_00394"/>
    </source>
</evidence>
<proteinExistence type="inferred from homology"/>
<sequence length="320" mass="33304">MSVGILGAGAFGTALAISLGHTTPVTLWARDAKQAQVMQNTRENTARLPGFALPAGVKVTSNLADLQGCDVLLLAVPAQKLRQFLRGLDQMVAGKTLVTCCKGIELETGMGPVDIAREICPQSEHAILTGPSFANDIAKGLPTALTLACANPDRARQLQQELSNGTLRLYRTSDVIGAQLGGALKNVIAIACGAAIGAQLGESARAALMTRGNAEMQRYAQHKGADASTLSGLSGFGDLVLTCTSELSRNYRFGLALGAGKAFDPATTVEGAATACAVAQEAREKALDMPISSVVAALVENRLDVENAMTKLLSRSLKEE</sequence>
<comment type="function">
    <text evidence="1">Catalyzes the reduction of the glycolytic intermediate dihydroxyacetone phosphate (DHAP) to sn-glycerol 3-phosphate (G3P), the key precursor for phospholipid synthesis.</text>
</comment>
<comment type="catalytic activity">
    <reaction evidence="1">
        <text>sn-glycerol 3-phosphate + NAD(+) = dihydroxyacetone phosphate + NADH + H(+)</text>
        <dbReference type="Rhea" id="RHEA:11092"/>
        <dbReference type="ChEBI" id="CHEBI:15378"/>
        <dbReference type="ChEBI" id="CHEBI:57540"/>
        <dbReference type="ChEBI" id="CHEBI:57597"/>
        <dbReference type="ChEBI" id="CHEBI:57642"/>
        <dbReference type="ChEBI" id="CHEBI:57945"/>
        <dbReference type="EC" id="1.1.1.94"/>
    </reaction>
    <physiologicalReaction direction="right-to-left" evidence="1">
        <dbReference type="Rhea" id="RHEA:11094"/>
    </physiologicalReaction>
</comment>
<comment type="catalytic activity">
    <reaction evidence="1">
        <text>sn-glycerol 3-phosphate + NADP(+) = dihydroxyacetone phosphate + NADPH + H(+)</text>
        <dbReference type="Rhea" id="RHEA:11096"/>
        <dbReference type="ChEBI" id="CHEBI:15378"/>
        <dbReference type="ChEBI" id="CHEBI:57597"/>
        <dbReference type="ChEBI" id="CHEBI:57642"/>
        <dbReference type="ChEBI" id="CHEBI:57783"/>
        <dbReference type="ChEBI" id="CHEBI:58349"/>
        <dbReference type="EC" id="1.1.1.94"/>
    </reaction>
    <physiologicalReaction direction="right-to-left" evidence="1">
        <dbReference type="Rhea" id="RHEA:11098"/>
    </physiologicalReaction>
</comment>
<comment type="pathway">
    <text evidence="1">Membrane lipid metabolism; glycerophospholipid metabolism.</text>
</comment>
<comment type="subcellular location">
    <subcellularLocation>
        <location evidence="1">Cytoplasm</location>
    </subcellularLocation>
</comment>
<comment type="similarity">
    <text evidence="1">Belongs to the NAD-dependent glycerol-3-phosphate dehydrogenase family.</text>
</comment>
<feature type="chain" id="PRO_0000255362" description="Glycerol-3-phosphate dehydrogenase [NAD(P)+]">
    <location>
        <begin position="1"/>
        <end position="320"/>
    </location>
</feature>
<feature type="active site" description="Proton acceptor" evidence="1">
    <location>
        <position position="185"/>
    </location>
</feature>
<feature type="binding site" evidence="1">
    <location>
        <position position="11"/>
    </location>
    <ligand>
        <name>NADPH</name>
        <dbReference type="ChEBI" id="CHEBI:57783"/>
    </ligand>
</feature>
<feature type="binding site" evidence="1">
    <location>
        <position position="30"/>
    </location>
    <ligand>
        <name>NADPH</name>
        <dbReference type="ChEBI" id="CHEBI:57783"/>
    </ligand>
</feature>
<feature type="binding site" evidence="1">
    <location>
        <position position="102"/>
    </location>
    <ligand>
        <name>NADPH</name>
        <dbReference type="ChEBI" id="CHEBI:57783"/>
    </ligand>
</feature>
<feature type="binding site" evidence="1">
    <location>
        <position position="102"/>
    </location>
    <ligand>
        <name>sn-glycerol 3-phosphate</name>
        <dbReference type="ChEBI" id="CHEBI:57597"/>
    </ligand>
</feature>
<feature type="binding site" evidence="1">
    <location>
        <position position="130"/>
    </location>
    <ligand>
        <name>sn-glycerol 3-phosphate</name>
        <dbReference type="ChEBI" id="CHEBI:57597"/>
    </ligand>
</feature>
<feature type="binding site" evidence="1">
    <location>
        <position position="132"/>
    </location>
    <ligand>
        <name>sn-glycerol 3-phosphate</name>
        <dbReference type="ChEBI" id="CHEBI:57597"/>
    </ligand>
</feature>
<feature type="binding site" evidence="1">
    <location>
        <position position="134"/>
    </location>
    <ligand>
        <name>NADPH</name>
        <dbReference type="ChEBI" id="CHEBI:57783"/>
    </ligand>
</feature>
<feature type="binding site" evidence="1">
    <location>
        <position position="185"/>
    </location>
    <ligand>
        <name>sn-glycerol 3-phosphate</name>
        <dbReference type="ChEBI" id="CHEBI:57597"/>
    </ligand>
</feature>
<feature type="binding site" evidence="1">
    <location>
        <position position="238"/>
    </location>
    <ligand>
        <name>sn-glycerol 3-phosphate</name>
        <dbReference type="ChEBI" id="CHEBI:57597"/>
    </ligand>
</feature>
<feature type="binding site" evidence="1">
    <location>
        <position position="248"/>
    </location>
    <ligand>
        <name>sn-glycerol 3-phosphate</name>
        <dbReference type="ChEBI" id="CHEBI:57597"/>
    </ligand>
</feature>
<feature type="binding site" evidence="1">
    <location>
        <position position="249"/>
    </location>
    <ligand>
        <name>NADPH</name>
        <dbReference type="ChEBI" id="CHEBI:57783"/>
    </ligand>
</feature>
<feature type="binding site" evidence="1">
    <location>
        <position position="249"/>
    </location>
    <ligand>
        <name>sn-glycerol 3-phosphate</name>
        <dbReference type="ChEBI" id="CHEBI:57597"/>
    </ligand>
</feature>
<feature type="binding site" evidence="1">
    <location>
        <position position="250"/>
    </location>
    <ligand>
        <name>sn-glycerol 3-phosphate</name>
        <dbReference type="ChEBI" id="CHEBI:57597"/>
    </ligand>
</feature>
<feature type="binding site" evidence="1">
    <location>
        <position position="270"/>
    </location>
    <ligand>
        <name>NADPH</name>
        <dbReference type="ChEBI" id="CHEBI:57783"/>
    </ligand>
</feature>
<keyword id="KW-0963">Cytoplasm</keyword>
<keyword id="KW-0444">Lipid biosynthesis</keyword>
<keyword id="KW-0443">Lipid metabolism</keyword>
<keyword id="KW-0520">NAD</keyword>
<keyword id="KW-0521">NADP</keyword>
<keyword id="KW-0547">Nucleotide-binding</keyword>
<keyword id="KW-0560">Oxidoreductase</keyword>
<keyword id="KW-0594">Phospholipid biosynthesis</keyword>
<keyword id="KW-1208">Phospholipid metabolism</keyword>
<keyword id="KW-1185">Reference proteome</keyword>
<protein>
    <recommendedName>
        <fullName evidence="1">Glycerol-3-phosphate dehydrogenase [NAD(P)+]</fullName>
        <ecNumber evidence="1">1.1.1.94</ecNumber>
    </recommendedName>
    <alternativeName>
        <fullName evidence="1">NAD(P)(+)-dependent glycerol-3-phosphate dehydrogenase</fullName>
    </alternativeName>
    <alternativeName>
        <fullName evidence="1">NAD(P)H-dependent dihydroxyacetone-phosphate reductase</fullName>
    </alternativeName>
</protein>
<dbReference type="EC" id="1.1.1.94" evidence="1"/>
<dbReference type="EMBL" id="CP000362">
    <property type="protein sequence ID" value="ABG30179.1"/>
    <property type="molecule type" value="Genomic_DNA"/>
</dbReference>
<dbReference type="RefSeq" id="WP_011566801.1">
    <property type="nucleotide sequence ID" value="NC_008209.1"/>
</dbReference>
<dbReference type="SMR" id="Q16CW4"/>
<dbReference type="STRING" id="375451.RD1_0469"/>
<dbReference type="KEGG" id="rde:RD1_0469"/>
<dbReference type="eggNOG" id="COG0240">
    <property type="taxonomic scope" value="Bacteria"/>
</dbReference>
<dbReference type="HOGENOM" id="CLU_033449_0_2_5"/>
<dbReference type="OrthoDB" id="9812273at2"/>
<dbReference type="UniPathway" id="UPA00940"/>
<dbReference type="Proteomes" id="UP000007029">
    <property type="component" value="Chromosome"/>
</dbReference>
<dbReference type="GO" id="GO:0005829">
    <property type="term" value="C:cytosol"/>
    <property type="evidence" value="ECO:0007669"/>
    <property type="project" value="TreeGrafter"/>
</dbReference>
<dbReference type="GO" id="GO:0047952">
    <property type="term" value="F:glycerol-3-phosphate dehydrogenase [NAD(P)+] activity"/>
    <property type="evidence" value="ECO:0007669"/>
    <property type="project" value="UniProtKB-UniRule"/>
</dbReference>
<dbReference type="GO" id="GO:0051287">
    <property type="term" value="F:NAD binding"/>
    <property type="evidence" value="ECO:0007669"/>
    <property type="project" value="InterPro"/>
</dbReference>
<dbReference type="GO" id="GO:0005975">
    <property type="term" value="P:carbohydrate metabolic process"/>
    <property type="evidence" value="ECO:0007669"/>
    <property type="project" value="InterPro"/>
</dbReference>
<dbReference type="GO" id="GO:0046167">
    <property type="term" value="P:glycerol-3-phosphate biosynthetic process"/>
    <property type="evidence" value="ECO:0007669"/>
    <property type="project" value="UniProtKB-UniRule"/>
</dbReference>
<dbReference type="GO" id="GO:0046168">
    <property type="term" value="P:glycerol-3-phosphate catabolic process"/>
    <property type="evidence" value="ECO:0007669"/>
    <property type="project" value="InterPro"/>
</dbReference>
<dbReference type="GO" id="GO:0006650">
    <property type="term" value="P:glycerophospholipid metabolic process"/>
    <property type="evidence" value="ECO:0007669"/>
    <property type="project" value="UniProtKB-UniRule"/>
</dbReference>
<dbReference type="GO" id="GO:0008654">
    <property type="term" value="P:phospholipid biosynthetic process"/>
    <property type="evidence" value="ECO:0007669"/>
    <property type="project" value="UniProtKB-KW"/>
</dbReference>
<dbReference type="FunFam" id="3.40.50.720:FF:000019">
    <property type="entry name" value="Glycerol-3-phosphate dehydrogenase [NAD(P)+]"/>
    <property type="match status" value="1"/>
</dbReference>
<dbReference type="Gene3D" id="1.10.1040.10">
    <property type="entry name" value="N-(1-d-carboxylethyl)-l-norvaline Dehydrogenase, domain 2"/>
    <property type="match status" value="1"/>
</dbReference>
<dbReference type="Gene3D" id="3.40.50.720">
    <property type="entry name" value="NAD(P)-binding Rossmann-like Domain"/>
    <property type="match status" value="1"/>
</dbReference>
<dbReference type="HAMAP" id="MF_00394">
    <property type="entry name" value="NAD_Glyc3P_dehydrog"/>
    <property type="match status" value="1"/>
</dbReference>
<dbReference type="InterPro" id="IPR008927">
    <property type="entry name" value="6-PGluconate_DH-like_C_sf"/>
</dbReference>
<dbReference type="InterPro" id="IPR013328">
    <property type="entry name" value="6PGD_dom2"/>
</dbReference>
<dbReference type="InterPro" id="IPR006168">
    <property type="entry name" value="G3P_DH_NAD-dep"/>
</dbReference>
<dbReference type="InterPro" id="IPR006109">
    <property type="entry name" value="G3P_DH_NAD-dep_C"/>
</dbReference>
<dbReference type="InterPro" id="IPR011128">
    <property type="entry name" value="G3P_DH_NAD-dep_N"/>
</dbReference>
<dbReference type="InterPro" id="IPR036291">
    <property type="entry name" value="NAD(P)-bd_dom_sf"/>
</dbReference>
<dbReference type="NCBIfam" id="NF000940">
    <property type="entry name" value="PRK00094.1-2"/>
    <property type="match status" value="1"/>
</dbReference>
<dbReference type="NCBIfam" id="NF000942">
    <property type="entry name" value="PRK00094.1-4"/>
    <property type="match status" value="1"/>
</dbReference>
<dbReference type="PANTHER" id="PTHR11728">
    <property type="entry name" value="GLYCEROL-3-PHOSPHATE DEHYDROGENASE"/>
    <property type="match status" value="1"/>
</dbReference>
<dbReference type="PANTHER" id="PTHR11728:SF1">
    <property type="entry name" value="GLYCEROL-3-PHOSPHATE DEHYDROGENASE [NAD(+)] 2, CHLOROPLASTIC"/>
    <property type="match status" value="1"/>
</dbReference>
<dbReference type="Pfam" id="PF07479">
    <property type="entry name" value="NAD_Gly3P_dh_C"/>
    <property type="match status" value="1"/>
</dbReference>
<dbReference type="Pfam" id="PF01210">
    <property type="entry name" value="NAD_Gly3P_dh_N"/>
    <property type="match status" value="1"/>
</dbReference>
<dbReference type="PIRSF" id="PIRSF000114">
    <property type="entry name" value="Glycerol-3-P_dh"/>
    <property type="match status" value="1"/>
</dbReference>
<dbReference type="PRINTS" id="PR00077">
    <property type="entry name" value="GPDHDRGNASE"/>
</dbReference>
<dbReference type="SUPFAM" id="SSF48179">
    <property type="entry name" value="6-phosphogluconate dehydrogenase C-terminal domain-like"/>
    <property type="match status" value="1"/>
</dbReference>
<dbReference type="SUPFAM" id="SSF51735">
    <property type="entry name" value="NAD(P)-binding Rossmann-fold domains"/>
    <property type="match status" value="1"/>
</dbReference>
<dbReference type="PROSITE" id="PS00957">
    <property type="entry name" value="NAD_G3PDH"/>
    <property type="match status" value="1"/>
</dbReference>
<gene>
    <name evidence="1" type="primary">gpsA</name>
    <name type="ordered locus">RD1_0469</name>
</gene>
<accession>Q16CW4</accession>
<name>GPDA_ROSDO</name>